<protein>
    <recommendedName>
        <fullName evidence="1">dITP/XTP pyrophosphatase</fullName>
        <ecNumber evidence="1">3.6.1.66</ecNumber>
    </recommendedName>
    <alternativeName>
        <fullName evidence="1">Non-canonical purine NTP pyrophosphatase</fullName>
    </alternativeName>
    <alternativeName>
        <fullName evidence="1">Non-standard purine NTP pyrophosphatase</fullName>
    </alternativeName>
    <alternativeName>
        <fullName evidence="1">Nucleoside-triphosphate diphosphatase</fullName>
    </alternativeName>
    <alternativeName>
        <fullName evidence="1">Nucleoside-triphosphate pyrophosphatase</fullName>
        <shortName evidence="1">NTPase</shortName>
    </alternativeName>
</protein>
<dbReference type="EC" id="3.6.1.66" evidence="1"/>
<dbReference type="EMBL" id="CP000267">
    <property type="protein sequence ID" value="ABD69360.1"/>
    <property type="molecule type" value="Genomic_DNA"/>
</dbReference>
<dbReference type="RefSeq" id="WP_011463928.1">
    <property type="nucleotide sequence ID" value="NC_007908.1"/>
</dbReference>
<dbReference type="SMR" id="Q21XZ3"/>
<dbReference type="STRING" id="338969.Rfer_1630"/>
<dbReference type="KEGG" id="rfr:Rfer_1630"/>
<dbReference type="eggNOG" id="COG0127">
    <property type="taxonomic scope" value="Bacteria"/>
</dbReference>
<dbReference type="HOGENOM" id="CLU_082080_0_3_4"/>
<dbReference type="OrthoDB" id="9807456at2"/>
<dbReference type="Proteomes" id="UP000008332">
    <property type="component" value="Chromosome"/>
</dbReference>
<dbReference type="GO" id="GO:0005829">
    <property type="term" value="C:cytosol"/>
    <property type="evidence" value="ECO:0007669"/>
    <property type="project" value="TreeGrafter"/>
</dbReference>
<dbReference type="GO" id="GO:0035870">
    <property type="term" value="F:dITP diphosphatase activity"/>
    <property type="evidence" value="ECO:0007669"/>
    <property type="project" value="RHEA"/>
</dbReference>
<dbReference type="GO" id="GO:0036220">
    <property type="term" value="F:ITP diphosphatase activity"/>
    <property type="evidence" value="ECO:0007669"/>
    <property type="project" value="UniProtKB-EC"/>
</dbReference>
<dbReference type="GO" id="GO:0046872">
    <property type="term" value="F:metal ion binding"/>
    <property type="evidence" value="ECO:0007669"/>
    <property type="project" value="UniProtKB-KW"/>
</dbReference>
<dbReference type="GO" id="GO:0000166">
    <property type="term" value="F:nucleotide binding"/>
    <property type="evidence" value="ECO:0007669"/>
    <property type="project" value="UniProtKB-KW"/>
</dbReference>
<dbReference type="GO" id="GO:0017111">
    <property type="term" value="F:ribonucleoside triphosphate phosphatase activity"/>
    <property type="evidence" value="ECO:0007669"/>
    <property type="project" value="InterPro"/>
</dbReference>
<dbReference type="GO" id="GO:0036222">
    <property type="term" value="F:XTP diphosphatase activity"/>
    <property type="evidence" value="ECO:0007669"/>
    <property type="project" value="RHEA"/>
</dbReference>
<dbReference type="GO" id="GO:0009117">
    <property type="term" value="P:nucleotide metabolic process"/>
    <property type="evidence" value="ECO:0007669"/>
    <property type="project" value="UniProtKB-KW"/>
</dbReference>
<dbReference type="GO" id="GO:0009146">
    <property type="term" value="P:purine nucleoside triphosphate catabolic process"/>
    <property type="evidence" value="ECO:0007669"/>
    <property type="project" value="UniProtKB-UniRule"/>
</dbReference>
<dbReference type="CDD" id="cd00515">
    <property type="entry name" value="HAM1"/>
    <property type="match status" value="1"/>
</dbReference>
<dbReference type="FunFam" id="3.90.950.10:FF:000001">
    <property type="entry name" value="dITP/XTP pyrophosphatase"/>
    <property type="match status" value="1"/>
</dbReference>
<dbReference type="Gene3D" id="3.90.950.10">
    <property type="match status" value="1"/>
</dbReference>
<dbReference type="HAMAP" id="MF_01405">
    <property type="entry name" value="Non_canon_purine_NTPase"/>
    <property type="match status" value="1"/>
</dbReference>
<dbReference type="InterPro" id="IPR020922">
    <property type="entry name" value="dITP/XTP_pyrophosphatase"/>
</dbReference>
<dbReference type="InterPro" id="IPR029001">
    <property type="entry name" value="ITPase-like_fam"/>
</dbReference>
<dbReference type="InterPro" id="IPR002637">
    <property type="entry name" value="RdgB/HAM1"/>
</dbReference>
<dbReference type="NCBIfam" id="TIGR00042">
    <property type="entry name" value="RdgB/HAM1 family non-canonical purine NTP pyrophosphatase"/>
    <property type="match status" value="1"/>
</dbReference>
<dbReference type="PANTHER" id="PTHR11067:SF9">
    <property type="entry name" value="INOSINE TRIPHOSPHATE PYROPHOSPHATASE"/>
    <property type="match status" value="1"/>
</dbReference>
<dbReference type="PANTHER" id="PTHR11067">
    <property type="entry name" value="INOSINE TRIPHOSPHATE PYROPHOSPHATASE/HAM1 PROTEIN"/>
    <property type="match status" value="1"/>
</dbReference>
<dbReference type="Pfam" id="PF01725">
    <property type="entry name" value="Ham1p_like"/>
    <property type="match status" value="1"/>
</dbReference>
<dbReference type="SUPFAM" id="SSF52972">
    <property type="entry name" value="ITPase-like"/>
    <property type="match status" value="1"/>
</dbReference>
<proteinExistence type="inferred from homology"/>
<evidence type="ECO:0000255" key="1">
    <source>
        <dbReference type="HAMAP-Rule" id="MF_01405"/>
    </source>
</evidence>
<reference key="1">
    <citation type="submission" date="2006-02" db="EMBL/GenBank/DDBJ databases">
        <title>Complete sequence of chromosome of Rhodoferax ferrireducens DSM 15236.</title>
        <authorList>
            <person name="Copeland A."/>
            <person name="Lucas S."/>
            <person name="Lapidus A."/>
            <person name="Barry K."/>
            <person name="Detter J.C."/>
            <person name="Glavina del Rio T."/>
            <person name="Hammon N."/>
            <person name="Israni S."/>
            <person name="Pitluck S."/>
            <person name="Brettin T."/>
            <person name="Bruce D."/>
            <person name="Han C."/>
            <person name="Tapia R."/>
            <person name="Gilna P."/>
            <person name="Kiss H."/>
            <person name="Schmutz J."/>
            <person name="Larimer F."/>
            <person name="Land M."/>
            <person name="Kyrpides N."/>
            <person name="Ivanova N."/>
            <person name="Richardson P."/>
        </authorList>
    </citation>
    <scope>NUCLEOTIDE SEQUENCE [LARGE SCALE GENOMIC DNA]</scope>
    <source>
        <strain>ATCC BAA-621 / DSM 15236 / T118</strain>
    </source>
</reference>
<accession>Q21XZ3</accession>
<keyword id="KW-0378">Hydrolase</keyword>
<keyword id="KW-0460">Magnesium</keyword>
<keyword id="KW-0479">Metal-binding</keyword>
<keyword id="KW-0546">Nucleotide metabolism</keyword>
<keyword id="KW-0547">Nucleotide-binding</keyword>
<keyword id="KW-1185">Reference proteome</keyword>
<gene>
    <name type="ordered locus">Rfer_1630</name>
</gene>
<feature type="chain" id="PRO_1000068431" description="dITP/XTP pyrophosphatase">
    <location>
        <begin position="1"/>
        <end position="199"/>
    </location>
</feature>
<feature type="active site" description="Proton acceptor" evidence="1">
    <location>
        <position position="68"/>
    </location>
</feature>
<feature type="binding site" evidence="1">
    <location>
        <begin position="7"/>
        <end position="12"/>
    </location>
    <ligand>
        <name>substrate</name>
    </ligand>
</feature>
<feature type="binding site" evidence="1">
    <location>
        <position position="68"/>
    </location>
    <ligand>
        <name>Mg(2+)</name>
        <dbReference type="ChEBI" id="CHEBI:18420"/>
    </ligand>
</feature>
<feature type="binding site" evidence="1">
    <location>
        <position position="69"/>
    </location>
    <ligand>
        <name>substrate</name>
    </ligand>
</feature>
<feature type="binding site" evidence="1">
    <location>
        <begin position="154"/>
        <end position="157"/>
    </location>
    <ligand>
        <name>substrate</name>
    </ligand>
</feature>
<feature type="binding site" evidence="1">
    <location>
        <position position="177"/>
    </location>
    <ligand>
        <name>substrate</name>
    </ligand>
</feature>
<feature type="binding site" evidence="1">
    <location>
        <begin position="182"/>
        <end position="183"/>
    </location>
    <ligand>
        <name>substrate</name>
    </ligand>
</feature>
<comment type="function">
    <text evidence="1">Pyrophosphatase that catalyzes the hydrolysis of nucleoside triphosphates to their monophosphate derivatives, with a high preference for the non-canonical purine nucleotides XTP (xanthosine triphosphate), dITP (deoxyinosine triphosphate) and ITP. Seems to function as a house-cleaning enzyme that removes non-canonical purine nucleotides from the nucleotide pool, thus preventing their incorporation into DNA/RNA and avoiding chromosomal lesions.</text>
</comment>
<comment type="catalytic activity">
    <reaction evidence="1">
        <text>XTP + H2O = XMP + diphosphate + H(+)</text>
        <dbReference type="Rhea" id="RHEA:28610"/>
        <dbReference type="ChEBI" id="CHEBI:15377"/>
        <dbReference type="ChEBI" id="CHEBI:15378"/>
        <dbReference type="ChEBI" id="CHEBI:33019"/>
        <dbReference type="ChEBI" id="CHEBI:57464"/>
        <dbReference type="ChEBI" id="CHEBI:61314"/>
        <dbReference type="EC" id="3.6.1.66"/>
    </reaction>
</comment>
<comment type="catalytic activity">
    <reaction evidence="1">
        <text>dITP + H2O = dIMP + diphosphate + H(+)</text>
        <dbReference type="Rhea" id="RHEA:28342"/>
        <dbReference type="ChEBI" id="CHEBI:15377"/>
        <dbReference type="ChEBI" id="CHEBI:15378"/>
        <dbReference type="ChEBI" id="CHEBI:33019"/>
        <dbReference type="ChEBI" id="CHEBI:61194"/>
        <dbReference type="ChEBI" id="CHEBI:61382"/>
        <dbReference type="EC" id="3.6.1.66"/>
    </reaction>
</comment>
<comment type="catalytic activity">
    <reaction evidence="1">
        <text>ITP + H2O = IMP + diphosphate + H(+)</text>
        <dbReference type="Rhea" id="RHEA:29399"/>
        <dbReference type="ChEBI" id="CHEBI:15377"/>
        <dbReference type="ChEBI" id="CHEBI:15378"/>
        <dbReference type="ChEBI" id="CHEBI:33019"/>
        <dbReference type="ChEBI" id="CHEBI:58053"/>
        <dbReference type="ChEBI" id="CHEBI:61402"/>
        <dbReference type="EC" id="3.6.1.66"/>
    </reaction>
</comment>
<comment type="cofactor">
    <cofactor evidence="1">
        <name>Mg(2+)</name>
        <dbReference type="ChEBI" id="CHEBI:18420"/>
    </cofactor>
    <text evidence="1">Binds 1 Mg(2+) ion per subunit.</text>
</comment>
<comment type="subunit">
    <text evidence="1">Homodimer.</text>
</comment>
<comment type="similarity">
    <text evidence="1">Belongs to the HAM1 NTPase family.</text>
</comment>
<sequence>MKIVLASNNRGKLAELRAMLAPLGFELITQGELGIPEAPEPYHTFVENALAKARHASAHSGLPALADDAGLCVDAFGGLPGVQTAFYATRFGYEKGDDNNVRALLEQMRDVDNRRAALVSTLVAVRSEQDPEPLIAVGRVVGEIARAPVGSHGFGFDPVMLIPEFGQTFAQLPVEVKNANSHRGRAARAMLALMRERWL</sequence>
<name>IXTPA_ALBFT</name>
<organism>
    <name type="scientific">Albidiferax ferrireducens (strain ATCC BAA-621 / DSM 15236 / T118)</name>
    <name type="common">Rhodoferax ferrireducens</name>
    <dbReference type="NCBI Taxonomy" id="338969"/>
    <lineage>
        <taxon>Bacteria</taxon>
        <taxon>Pseudomonadati</taxon>
        <taxon>Pseudomonadota</taxon>
        <taxon>Betaproteobacteria</taxon>
        <taxon>Burkholderiales</taxon>
        <taxon>Comamonadaceae</taxon>
        <taxon>Rhodoferax</taxon>
    </lineage>
</organism>